<feature type="chain" id="PRO_1000089889" description="Phosphate acyltransferase">
    <location>
        <begin position="1"/>
        <end position="321"/>
    </location>
</feature>
<accession>B0B939</accession>
<gene>
    <name evidence="1" type="primary">plsX</name>
    <name type="ordered locus">CTL0182</name>
</gene>
<sequence>MKVRLGVDMMGGDHDPLVVWEALGEVLLSSTGEQPVEFTVFATSDVHHQLMNSPLSRSVRIVTAEDFVSMEDSLLAAVRKKRSSMALGLDALQQGDLDGFVSSGNTAALVTLARSKIPMIPAVPRPALLVSVPTLSGFAVILDVGATVSVNPDEMVGFARMGLAYRQSLSSNSNQPFTLGLLNIGSEERKGTDSHKQTFRMLRNIFGSAFLGNIESGDVFSGKVDIVVTDGFTGNVFLKTAEGLFDFLRHILGDRLEKSIKMQFDYTIYPGSIISGLSRLVIKCHGKSHGTALFGGISGAIDLARANVCSRIADRFGDNVV</sequence>
<proteinExistence type="inferred from homology"/>
<organism>
    <name type="scientific">Chlamydia trachomatis serovar L2 (strain ATCC VR-902B / DSM 19102 / 434/Bu)</name>
    <dbReference type="NCBI Taxonomy" id="471472"/>
    <lineage>
        <taxon>Bacteria</taxon>
        <taxon>Pseudomonadati</taxon>
        <taxon>Chlamydiota</taxon>
        <taxon>Chlamydiia</taxon>
        <taxon>Chlamydiales</taxon>
        <taxon>Chlamydiaceae</taxon>
        <taxon>Chlamydia/Chlamydophila group</taxon>
        <taxon>Chlamydia</taxon>
    </lineage>
</organism>
<evidence type="ECO:0000255" key="1">
    <source>
        <dbReference type="HAMAP-Rule" id="MF_00019"/>
    </source>
</evidence>
<protein>
    <recommendedName>
        <fullName evidence="1">Phosphate acyltransferase</fullName>
        <ecNumber evidence="1">2.3.1.274</ecNumber>
    </recommendedName>
    <alternativeName>
        <fullName evidence="1">Acyl-ACP phosphotransacylase</fullName>
    </alternativeName>
    <alternativeName>
        <fullName evidence="1">Acyl-[acyl-carrier-protein]--phosphate acyltransferase</fullName>
    </alternativeName>
    <alternativeName>
        <fullName evidence="1">Phosphate-acyl-ACP acyltransferase</fullName>
    </alternativeName>
</protein>
<name>PLSX_CHLT2</name>
<keyword id="KW-0963">Cytoplasm</keyword>
<keyword id="KW-0444">Lipid biosynthesis</keyword>
<keyword id="KW-0443">Lipid metabolism</keyword>
<keyword id="KW-0594">Phospholipid biosynthesis</keyword>
<keyword id="KW-1208">Phospholipid metabolism</keyword>
<keyword id="KW-0808">Transferase</keyword>
<comment type="function">
    <text evidence="1">Catalyzes the reversible formation of acyl-phosphate (acyl-PO(4)) from acyl-[acyl-carrier-protein] (acyl-ACP). This enzyme utilizes acyl-ACP as fatty acyl donor, but not acyl-CoA.</text>
</comment>
<comment type="catalytic activity">
    <reaction evidence="1">
        <text>a fatty acyl-[ACP] + phosphate = an acyl phosphate + holo-[ACP]</text>
        <dbReference type="Rhea" id="RHEA:42292"/>
        <dbReference type="Rhea" id="RHEA-COMP:9685"/>
        <dbReference type="Rhea" id="RHEA-COMP:14125"/>
        <dbReference type="ChEBI" id="CHEBI:43474"/>
        <dbReference type="ChEBI" id="CHEBI:59918"/>
        <dbReference type="ChEBI" id="CHEBI:64479"/>
        <dbReference type="ChEBI" id="CHEBI:138651"/>
        <dbReference type="EC" id="2.3.1.274"/>
    </reaction>
</comment>
<comment type="pathway">
    <text evidence="1">Lipid metabolism; phospholipid metabolism.</text>
</comment>
<comment type="subunit">
    <text evidence="1">Homodimer. Probably interacts with PlsY.</text>
</comment>
<comment type="subcellular location">
    <subcellularLocation>
        <location evidence="1">Cytoplasm</location>
    </subcellularLocation>
    <text evidence="1">Associated with the membrane possibly through PlsY.</text>
</comment>
<comment type="similarity">
    <text evidence="1">Belongs to the PlsX family.</text>
</comment>
<reference key="1">
    <citation type="journal article" date="2008" name="Genome Res.">
        <title>Chlamydia trachomatis: genome sequence analysis of lymphogranuloma venereum isolates.</title>
        <authorList>
            <person name="Thomson N.R."/>
            <person name="Holden M.T.G."/>
            <person name="Carder C."/>
            <person name="Lennard N."/>
            <person name="Lockey S.J."/>
            <person name="Marsh P."/>
            <person name="Skipp P."/>
            <person name="O'Connor C.D."/>
            <person name="Goodhead I."/>
            <person name="Norbertzcak H."/>
            <person name="Harris B."/>
            <person name="Ormond D."/>
            <person name="Rance R."/>
            <person name="Quail M.A."/>
            <person name="Parkhill J."/>
            <person name="Stephens R.S."/>
            <person name="Clarke I.N."/>
        </authorList>
    </citation>
    <scope>NUCLEOTIDE SEQUENCE [LARGE SCALE GENOMIC DNA]</scope>
    <source>
        <strain>ATCC VR-902B / DSM 19102 / 434/Bu</strain>
    </source>
</reference>
<dbReference type="EC" id="2.3.1.274" evidence="1"/>
<dbReference type="EMBL" id="AM884176">
    <property type="protein sequence ID" value="CAP03626.1"/>
    <property type="molecule type" value="Genomic_DNA"/>
</dbReference>
<dbReference type="RefSeq" id="WP_009872947.1">
    <property type="nucleotide sequence ID" value="NC_010287.1"/>
</dbReference>
<dbReference type="RefSeq" id="YP_001654272.1">
    <property type="nucleotide sequence ID" value="NC_010287.1"/>
</dbReference>
<dbReference type="SMR" id="B0B939"/>
<dbReference type="KEGG" id="ctb:CTL0182"/>
<dbReference type="PATRIC" id="fig|471472.4.peg.196"/>
<dbReference type="HOGENOM" id="CLU_039379_1_1_0"/>
<dbReference type="UniPathway" id="UPA00085"/>
<dbReference type="Proteomes" id="UP001154402">
    <property type="component" value="Chromosome"/>
</dbReference>
<dbReference type="GO" id="GO:0005737">
    <property type="term" value="C:cytoplasm"/>
    <property type="evidence" value="ECO:0007669"/>
    <property type="project" value="UniProtKB-SubCell"/>
</dbReference>
<dbReference type="GO" id="GO:0043811">
    <property type="term" value="F:phosphate:acyl-[acyl carrier protein] acyltransferase activity"/>
    <property type="evidence" value="ECO:0007669"/>
    <property type="project" value="UniProtKB-UniRule"/>
</dbReference>
<dbReference type="GO" id="GO:0006633">
    <property type="term" value="P:fatty acid biosynthetic process"/>
    <property type="evidence" value="ECO:0007669"/>
    <property type="project" value="UniProtKB-UniRule"/>
</dbReference>
<dbReference type="GO" id="GO:0008654">
    <property type="term" value="P:phospholipid biosynthetic process"/>
    <property type="evidence" value="ECO:0007669"/>
    <property type="project" value="UniProtKB-KW"/>
</dbReference>
<dbReference type="Gene3D" id="3.40.718.10">
    <property type="entry name" value="Isopropylmalate Dehydrogenase"/>
    <property type="match status" value="1"/>
</dbReference>
<dbReference type="HAMAP" id="MF_00019">
    <property type="entry name" value="PlsX"/>
    <property type="match status" value="1"/>
</dbReference>
<dbReference type="InterPro" id="IPR003664">
    <property type="entry name" value="FA_synthesis"/>
</dbReference>
<dbReference type="InterPro" id="IPR012281">
    <property type="entry name" value="Phospholipid_synth_PlsX-like"/>
</dbReference>
<dbReference type="NCBIfam" id="NF010420">
    <property type="entry name" value="PRK13846.1"/>
    <property type="match status" value="1"/>
</dbReference>
<dbReference type="PANTHER" id="PTHR30100">
    <property type="entry name" value="FATTY ACID/PHOSPHOLIPID SYNTHESIS PROTEIN PLSX"/>
    <property type="match status" value="1"/>
</dbReference>
<dbReference type="PANTHER" id="PTHR30100:SF1">
    <property type="entry name" value="PHOSPHATE ACYLTRANSFERASE"/>
    <property type="match status" value="1"/>
</dbReference>
<dbReference type="Pfam" id="PF02504">
    <property type="entry name" value="FA_synthesis"/>
    <property type="match status" value="1"/>
</dbReference>
<dbReference type="PIRSF" id="PIRSF002465">
    <property type="entry name" value="Phsphlp_syn_PlsX"/>
    <property type="match status" value="1"/>
</dbReference>
<dbReference type="SUPFAM" id="SSF53659">
    <property type="entry name" value="Isocitrate/Isopropylmalate dehydrogenase-like"/>
    <property type="match status" value="1"/>
</dbReference>